<organism>
    <name type="scientific">Shewanella frigidimarina (strain NCIMB 400)</name>
    <dbReference type="NCBI Taxonomy" id="318167"/>
    <lineage>
        <taxon>Bacteria</taxon>
        <taxon>Pseudomonadati</taxon>
        <taxon>Pseudomonadota</taxon>
        <taxon>Gammaproteobacteria</taxon>
        <taxon>Alteromonadales</taxon>
        <taxon>Shewanellaceae</taxon>
        <taxon>Shewanella</taxon>
    </lineage>
</organism>
<name>RUVA_SHEFN</name>
<reference key="1">
    <citation type="submission" date="2006-08" db="EMBL/GenBank/DDBJ databases">
        <title>Complete sequence of Shewanella frigidimarina NCIMB 400.</title>
        <authorList>
            <consortium name="US DOE Joint Genome Institute"/>
            <person name="Copeland A."/>
            <person name="Lucas S."/>
            <person name="Lapidus A."/>
            <person name="Barry K."/>
            <person name="Detter J.C."/>
            <person name="Glavina del Rio T."/>
            <person name="Hammon N."/>
            <person name="Israni S."/>
            <person name="Dalin E."/>
            <person name="Tice H."/>
            <person name="Pitluck S."/>
            <person name="Fredrickson J.K."/>
            <person name="Kolker E."/>
            <person name="McCuel L.A."/>
            <person name="DiChristina T."/>
            <person name="Nealson K.H."/>
            <person name="Newman D."/>
            <person name="Tiedje J.M."/>
            <person name="Zhou J."/>
            <person name="Romine M.F."/>
            <person name="Culley D.E."/>
            <person name="Serres M."/>
            <person name="Chertkov O."/>
            <person name="Brettin T."/>
            <person name="Bruce D."/>
            <person name="Han C."/>
            <person name="Tapia R."/>
            <person name="Gilna P."/>
            <person name="Schmutz J."/>
            <person name="Larimer F."/>
            <person name="Land M."/>
            <person name="Hauser L."/>
            <person name="Kyrpides N."/>
            <person name="Mikhailova N."/>
            <person name="Richardson P."/>
        </authorList>
    </citation>
    <scope>NUCLEOTIDE SEQUENCE [LARGE SCALE GENOMIC DNA]</scope>
    <source>
        <strain>NCIMB 400</strain>
    </source>
</reference>
<evidence type="ECO:0000255" key="1">
    <source>
        <dbReference type="HAMAP-Rule" id="MF_00031"/>
    </source>
</evidence>
<sequence>MIGRLSGILVEKQAPEVVLDVNGVGYELQVPMTSFYELPALNQAAMLFTHFVVREDAQLLYGFITKQERALFRLLIKTNGVGPKLALTILSGMTASEFVSCVERDDIATLVKLPGVGKKTAERLVIEMRDKLKSLLEASAGSEREFMLQSNYTPAAAVDSAEEDAISALLSLGYKPAQASKSVSAAFKEGMSSETLIKAALKSML</sequence>
<proteinExistence type="inferred from homology"/>
<gene>
    <name evidence="1" type="primary">ruvA</name>
    <name type="ordered locus">Sfri_2181</name>
</gene>
<comment type="function">
    <text evidence="1">The RuvA-RuvB-RuvC complex processes Holliday junction (HJ) DNA during genetic recombination and DNA repair, while the RuvA-RuvB complex plays an important role in the rescue of blocked DNA replication forks via replication fork reversal (RFR). RuvA specifically binds to HJ cruciform DNA, conferring on it an open structure. The RuvB hexamer acts as an ATP-dependent pump, pulling dsDNA into and through the RuvAB complex. HJ branch migration allows RuvC to scan DNA until it finds its consensus sequence, where it cleaves and resolves the cruciform DNA.</text>
</comment>
<comment type="subunit">
    <text evidence="1">Homotetramer. Forms an RuvA(8)-RuvB(12)-Holliday junction (HJ) complex. HJ DNA is sandwiched between 2 RuvA tetramers; dsDNA enters through RuvA and exits via RuvB. An RuvB hexamer assembles on each DNA strand where it exits the tetramer. Each RuvB hexamer is contacted by two RuvA subunits (via domain III) on 2 adjacent RuvB subunits; this complex drives branch migration. In the full resolvosome a probable DNA-RuvA(4)-RuvB(12)-RuvC(2) complex forms which resolves the HJ.</text>
</comment>
<comment type="subcellular location">
    <subcellularLocation>
        <location evidence="1">Cytoplasm</location>
    </subcellularLocation>
</comment>
<comment type="domain">
    <text evidence="1">Has three domains with a flexible linker between the domains II and III and assumes an 'L' shape. Domain III is highly mobile and contacts RuvB.</text>
</comment>
<comment type="similarity">
    <text evidence="1">Belongs to the RuvA family.</text>
</comment>
<accession>Q081N8</accession>
<dbReference type="EMBL" id="CP000447">
    <property type="protein sequence ID" value="ABI72027.1"/>
    <property type="molecule type" value="Genomic_DNA"/>
</dbReference>
<dbReference type="RefSeq" id="WP_011637637.1">
    <property type="nucleotide sequence ID" value="NC_008345.1"/>
</dbReference>
<dbReference type="SMR" id="Q081N8"/>
<dbReference type="STRING" id="318167.Sfri_2181"/>
<dbReference type="KEGG" id="sfr:Sfri_2181"/>
<dbReference type="eggNOG" id="COG0632">
    <property type="taxonomic scope" value="Bacteria"/>
</dbReference>
<dbReference type="HOGENOM" id="CLU_087936_0_0_6"/>
<dbReference type="OrthoDB" id="5293449at2"/>
<dbReference type="Proteomes" id="UP000000684">
    <property type="component" value="Chromosome"/>
</dbReference>
<dbReference type="GO" id="GO:0005737">
    <property type="term" value="C:cytoplasm"/>
    <property type="evidence" value="ECO:0007669"/>
    <property type="project" value="UniProtKB-SubCell"/>
</dbReference>
<dbReference type="GO" id="GO:0009379">
    <property type="term" value="C:Holliday junction helicase complex"/>
    <property type="evidence" value="ECO:0007669"/>
    <property type="project" value="InterPro"/>
</dbReference>
<dbReference type="GO" id="GO:0048476">
    <property type="term" value="C:Holliday junction resolvase complex"/>
    <property type="evidence" value="ECO:0007669"/>
    <property type="project" value="UniProtKB-UniRule"/>
</dbReference>
<dbReference type="GO" id="GO:0005524">
    <property type="term" value="F:ATP binding"/>
    <property type="evidence" value="ECO:0007669"/>
    <property type="project" value="InterPro"/>
</dbReference>
<dbReference type="GO" id="GO:0000400">
    <property type="term" value="F:four-way junction DNA binding"/>
    <property type="evidence" value="ECO:0007669"/>
    <property type="project" value="UniProtKB-UniRule"/>
</dbReference>
<dbReference type="GO" id="GO:0009378">
    <property type="term" value="F:four-way junction helicase activity"/>
    <property type="evidence" value="ECO:0007669"/>
    <property type="project" value="InterPro"/>
</dbReference>
<dbReference type="GO" id="GO:0006310">
    <property type="term" value="P:DNA recombination"/>
    <property type="evidence" value="ECO:0007669"/>
    <property type="project" value="UniProtKB-UniRule"/>
</dbReference>
<dbReference type="GO" id="GO:0006281">
    <property type="term" value="P:DNA repair"/>
    <property type="evidence" value="ECO:0007669"/>
    <property type="project" value="UniProtKB-UniRule"/>
</dbReference>
<dbReference type="CDD" id="cd14332">
    <property type="entry name" value="UBA_RuvA_C"/>
    <property type="match status" value="1"/>
</dbReference>
<dbReference type="Gene3D" id="1.10.150.20">
    <property type="entry name" value="5' to 3' exonuclease, C-terminal subdomain"/>
    <property type="match status" value="1"/>
</dbReference>
<dbReference type="Gene3D" id="1.10.8.10">
    <property type="entry name" value="DNA helicase RuvA subunit, C-terminal domain"/>
    <property type="match status" value="1"/>
</dbReference>
<dbReference type="Gene3D" id="2.40.50.140">
    <property type="entry name" value="Nucleic acid-binding proteins"/>
    <property type="match status" value="1"/>
</dbReference>
<dbReference type="HAMAP" id="MF_00031">
    <property type="entry name" value="DNA_HJ_migration_RuvA"/>
    <property type="match status" value="1"/>
</dbReference>
<dbReference type="InterPro" id="IPR013849">
    <property type="entry name" value="DNA_helicase_Holl-junc_RuvA_I"/>
</dbReference>
<dbReference type="InterPro" id="IPR003583">
    <property type="entry name" value="Hlx-hairpin-Hlx_DNA-bd_motif"/>
</dbReference>
<dbReference type="InterPro" id="IPR012340">
    <property type="entry name" value="NA-bd_OB-fold"/>
</dbReference>
<dbReference type="InterPro" id="IPR000085">
    <property type="entry name" value="RuvA"/>
</dbReference>
<dbReference type="InterPro" id="IPR010994">
    <property type="entry name" value="RuvA_2-like"/>
</dbReference>
<dbReference type="InterPro" id="IPR011114">
    <property type="entry name" value="RuvA_C"/>
</dbReference>
<dbReference type="InterPro" id="IPR036267">
    <property type="entry name" value="RuvA_C_sf"/>
</dbReference>
<dbReference type="NCBIfam" id="TIGR00084">
    <property type="entry name" value="ruvA"/>
    <property type="match status" value="1"/>
</dbReference>
<dbReference type="Pfam" id="PF14520">
    <property type="entry name" value="HHH_5"/>
    <property type="match status" value="1"/>
</dbReference>
<dbReference type="Pfam" id="PF07499">
    <property type="entry name" value="RuvA_C"/>
    <property type="match status" value="1"/>
</dbReference>
<dbReference type="Pfam" id="PF01330">
    <property type="entry name" value="RuvA_N"/>
    <property type="match status" value="1"/>
</dbReference>
<dbReference type="SMART" id="SM00278">
    <property type="entry name" value="HhH1"/>
    <property type="match status" value="2"/>
</dbReference>
<dbReference type="SUPFAM" id="SSF46929">
    <property type="entry name" value="DNA helicase RuvA subunit, C-terminal domain"/>
    <property type="match status" value="1"/>
</dbReference>
<dbReference type="SUPFAM" id="SSF50249">
    <property type="entry name" value="Nucleic acid-binding proteins"/>
    <property type="match status" value="1"/>
</dbReference>
<dbReference type="SUPFAM" id="SSF47781">
    <property type="entry name" value="RuvA domain 2-like"/>
    <property type="match status" value="1"/>
</dbReference>
<feature type="chain" id="PRO_1000002549" description="Holliday junction branch migration complex subunit RuvA">
    <location>
        <begin position="1"/>
        <end position="205"/>
    </location>
</feature>
<feature type="region of interest" description="Domain I" evidence="1">
    <location>
        <begin position="1"/>
        <end position="64"/>
    </location>
</feature>
<feature type="region of interest" description="Domain II" evidence="1">
    <location>
        <begin position="65"/>
        <end position="143"/>
    </location>
</feature>
<feature type="region of interest" description="Flexible linker" evidence="1">
    <location>
        <begin position="144"/>
        <end position="156"/>
    </location>
</feature>
<feature type="region of interest" description="Domain III" evidence="1">
    <location>
        <begin position="157"/>
        <end position="205"/>
    </location>
</feature>
<protein>
    <recommendedName>
        <fullName evidence="1">Holliday junction branch migration complex subunit RuvA</fullName>
    </recommendedName>
</protein>
<keyword id="KW-0963">Cytoplasm</keyword>
<keyword id="KW-0227">DNA damage</keyword>
<keyword id="KW-0233">DNA recombination</keyword>
<keyword id="KW-0234">DNA repair</keyword>
<keyword id="KW-0238">DNA-binding</keyword>
<keyword id="KW-1185">Reference proteome</keyword>